<accession>Q4K0R3</accession>
<keyword id="KW-0270">Exopolysaccharide synthesis</keyword>
<keyword id="KW-0808">Transferase</keyword>
<sequence>MNKIDFVVTWVDGNDPVWKEKKSRYDGSVSTSKQSMNSVKAYREWGTFKYWFRGVERFAPWVNKVYLVTDQQRPSWLDINSEKLVLVDHTEIICNDCLPVFSANPIESNIHRIPGLSEHFVFFNDDMYLTAPVEPTDFFSEDGLPKYNTALSPIIPERYGTGNFQINDMEIVTSYFSRNEILKNGQFFDPKQGLKSIVKSLLYRNSQFICGFWESHLPYPLLKSTMDLIWEKEKAVLGRTSASRFRNPSDTNVWLFKYWQIASGQYAVGNPKLGRLFSLDNAGPDFWNLLNSGKYKIMCINDVYDIKDEEKVMQEFIAAMKNLLPDKSTFEL</sequence>
<reference key="1">
    <citation type="journal article" date="2006" name="PLoS Genet.">
        <title>Genetic analysis of the capsular biosynthetic locus from all 90 pneumococcal serotypes.</title>
        <authorList>
            <person name="Bentley S.D."/>
            <person name="Aanensen D.M."/>
            <person name="Mavroidi A."/>
            <person name="Saunders D."/>
            <person name="Rabbinowitsch E."/>
            <person name="Collins M."/>
            <person name="Donohoe K."/>
            <person name="Harris D."/>
            <person name="Murphy L."/>
            <person name="Quail M.A."/>
            <person name="Samuel G."/>
            <person name="Skovsted I.C."/>
            <person name="Kaltoft M.S."/>
            <person name="Barrell B."/>
            <person name="Reeves P.R."/>
            <person name="Parkhill J."/>
            <person name="Spratt B.G."/>
        </authorList>
    </citation>
    <scope>NUCLEOTIDE SEQUENCE [GENOMIC DNA]</scope>
    <source>
        <strain>546/62 / Serotype 21</strain>
    </source>
</reference>
<reference key="2">
    <citation type="journal article" date="2005" name="PLoS Comput. Biol.">
        <title>Stealth proteins: in silico identification of a novel protein family rendering bacterial pathogens invisible to host immune defense.</title>
        <authorList>
            <person name="Sperisen P."/>
            <person name="Schmid C.D."/>
            <person name="Bucher P."/>
            <person name="Zilian O."/>
        </authorList>
    </citation>
    <scope>IDENTIFICATION AS A STEALTH PROTEIN</scope>
    <scope>PREDICTION OF FUNCTION</scope>
</reference>
<feature type="chain" id="PRO_0000235968" description="Capsular polysaccharide phosphotransferase WcwK">
    <location>
        <begin position="1"/>
        <end position="332"/>
    </location>
</feature>
<evidence type="ECO:0000305" key="1"/>
<dbReference type="EC" id="2.7.-.-"/>
<dbReference type="EMBL" id="CR931680">
    <property type="protein sequence ID" value="CAI33742.1"/>
    <property type="molecule type" value="Genomic_DNA"/>
</dbReference>
<dbReference type="RefSeq" id="WP_044793508.1">
    <property type="nucleotide sequence ID" value="NZ_CDPZ01000038.1"/>
</dbReference>
<dbReference type="SMR" id="Q4K0R3"/>
<dbReference type="GO" id="GO:0016772">
    <property type="term" value="F:transferase activity, transferring phosphorus-containing groups"/>
    <property type="evidence" value="ECO:0007669"/>
    <property type="project" value="InterPro"/>
</dbReference>
<dbReference type="GO" id="GO:0000271">
    <property type="term" value="P:polysaccharide biosynthetic process"/>
    <property type="evidence" value="ECO:0007669"/>
    <property type="project" value="UniProtKB-KW"/>
</dbReference>
<dbReference type="InterPro" id="IPR047141">
    <property type="entry name" value="Stealth"/>
</dbReference>
<dbReference type="InterPro" id="IPR031358">
    <property type="entry name" value="Stealth_CR1"/>
</dbReference>
<dbReference type="InterPro" id="IPR021520">
    <property type="entry name" value="Stealth_CR2"/>
</dbReference>
<dbReference type="InterPro" id="IPR031357">
    <property type="entry name" value="Stealth_CR3"/>
</dbReference>
<dbReference type="PANTHER" id="PTHR24045">
    <property type="match status" value="1"/>
</dbReference>
<dbReference type="PANTHER" id="PTHR24045:SF0">
    <property type="entry name" value="N-ACETYLGLUCOSAMINE-1-PHOSPHOTRANSFERASE SUBUNITS ALPHA_BETA"/>
    <property type="match status" value="1"/>
</dbReference>
<dbReference type="Pfam" id="PF17101">
    <property type="entry name" value="Stealth_CR1"/>
    <property type="match status" value="1"/>
</dbReference>
<dbReference type="Pfam" id="PF11380">
    <property type="entry name" value="Stealth_CR2"/>
    <property type="match status" value="1"/>
</dbReference>
<dbReference type="Pfam" id="PF17102">
    <property type="entry name" value="Stealth_CR3"/>
    <property type="match status" value="1"/>
</dbReference>
<organism>
    <name type="scientific">Streptococcus pneumoniae</name>
    <dbReference type="NCBI Taxonomy" id="1313"/>
    <lineage>
        <taxon>Bacteria</taxon>
        <taxon>Bacillati</taxon>
        <taxon>Bacillota</taxon>
        <taxon>Bacilli</taxon>
        <taxon>Lactobacillales</taxon>
        <taxon>Streptococcaceae</taxon>
        <taxon>Streptococcus</taxon>
    </lineage>
</organism>
<name>WCWK2_STREE</name>
<protein>
    <recommendedName>
        <fullName>Capsular polysaccharide phosphotransferase WcwK</fullName>
        <ecNumber>2.7.-.-</ecNumber>
    </recommendedName>
    <alternativeName>
        <fullName>Stealth protein WcwK</fullName>
    </alternativeName>
</protein>
<gene>
    <name type="primary">wcwK</name>
    <name type="ORF">SPC21_0011</name>
</gene>
<comment type="miscellaneous">
    <text>Stealth proteins are part of a protein family that is conserved from bacteria to higher eukaryotes. Family members were first identified in microbes as proteins that help pathogens to elude the host innate immune system. Microbial stealth proteins are involved in the biosynthesis of exopolysaccharides. Stealth proteins are predicted to function as hexose-1-phosphoryltransferases.</text>
</comment>
<comment type="similarity">
    <text evidence="1">Belongs to the stealth family.</text>
</comment>
<proteinExistence type="inferred from homology"/>